<sequence>MATFTTADVKRLRELTAAGMMDCKKALEEADGDFDKAVELLRIKGAKDVGKRAERTTANGLVAAATDDGVGVLVEVKCETDFVAKGERFQELGRRIVQAALTTETDDPAVLLDAVVDGRSVRDLVEENSAALGEKIELGRLARFAGAAVVSYLHKTSPDLPPQLGVLVELSAPNAEAGKDIAQHIAAFAPRYLTRADVPEDVVAAERRIAEATAREEGKPEQALPKIVEGRVTGFFKETVLTEQAFAKDPKKTVQQVLDDAGVRVVRFARFRIGQL</sequence>
<comment type="function">
    <text evidence="1">Associates with the EF-Tu.GDP complex and induces the exchange of GDP to GTP. It remains bound to the aminoacyl-tRNA.EF-Tu.GTP complex up to the GTP hydrolysis stage on the ribosome.</text>
</comment>
<comment type="subcellular location">
    <subcellularLocation>
        <location evidence="1">Cytoplasm</location>
    </subcellularLocation>
</comment>
<comment type="similarity">
    <text evidence="1">Belongs to the EF-Ts family.</text>
</comment>
<gene>
    <name evidence="1" type="primary">tsf</name>
    <name type="ordered locus">Acel_1541</name>
</gene>
<accession>A0LV53</accession>
<protein>
    <recommendedName>
        <fullName evidence="1">Elongation factor Ts</fullName>
        <shortName evidence="1">EF-Ts</shortName>
    </recommendedName>
</protein>
<name>EFTS_ACIC1</name>
<feature type="chain" id="PRO_1000006044" description="Elongation factor Ts">
    <location>
        <begin position="1"/>
        <end position="276"/>
    </location>
</feature>
<feature type="region of interest" description="Involved in Mg(2+) ion dislocation from EF-Tu" evidence="1">
    <location>
        <begin position="80"/>
        <end position="83"/>
    </location>
</feature>
<organism>
    <name type="scientific">Acidothermus cellulolyticus (strain ATCC 43068 / DSM 8971 / 11B)</name>
    <dbReference type="NCBI Taxonomy" id="351607"/>
    <lineage>
        <taxon>Bacteria</taxon>
        <taxon>Bacillati</taxon>
        <taxon>Actinomycetota</taxon>
        <taxon>Actinomycetes</taxon>
        <taxon>Acidothermales</taxon>
        <taxon>Acidothermaceae</taxon>
        <taxon>Acidothermus</taxon>
    </lineage>
</organism>
<evidence type="ECO:0000255" key="1">
    <source>
        <dbReference type="HAMAP-Rule" id="MF_00050"/>
    </source>
</evidence>
<keyword id="KW-0963">Cytoplasm</keyword>
<keyword id="KW-0251">Elongation factor</keyword>
<keyword id="KW-0648">Protein biosynthesis</keyword>
<keyword id="KW-1185">Reference proteome</keyword>
<reference key="1">
    <citation type="journal article" date="2009" name="Genome Res.">
        <title>Complete genome of the cellulolytic thermophile Acidothermus cellulolyticus 11B provides insights into its ecophysiological and evolutionary adaptations.</title>
        <authorList>
            <person name="Barabote R.D."/>
            <person name="Xie G."/>
            <person name="Leu D.H."/>
            <person name="Normand P."/>
            <person name="Necsulea A."/>
            <person name="Daubin V."/>
            <person name="Medigue C."/>
            <person name="Adney W.S."/>
            <person name="Xu X.C."/>
            <person name="Lapidus A."/>
            <person name="Parales R.E."/>
            <person name="Detter C."/>
            <person name="Pujic P."/>
            <person name="Bruce D."/>
            <person name="Lavire C."/>
            <person name="Challacombe J.F."/>
            <person name="Brettin T.S."/>
            <person name="Berry A.M."/>
        </authorList>
    </citation>
    <scope>NUCLEOTIDE SEQUENCE [LARGE SCALE GENOMIC DNA]</scope>
    <source>
        <strain>ATCC 43068 / DSM 8971 / 11B</strain>
    </source>
</reference>
<proteinExistence type="inferred from homology"/>
<dbReference type="EMBL" id="CP000481">
    <property type="protein sequence ID" value="ABK53313.1"/>
    <property type="molecule type" value="Genomic_DNA"/>
</dbReference>
<dbReference type="RefSeq" id="WP_011720376.1">
    <property type="nucleotide sequence ID" value="NC_008578.1"/>
</dbReference>
<dbReference type="SMR" id="A0LV53"/>
<dbReference type="FunCoup" id="A0LV53">
    <property type="interactions" value="363"/>
</dbReference>
<dbReference type="STRING" id="351607.Acel_1541"/>
<dbReference type="KEGG" id="ace:Acel_1541"/>
<dbReference type="eggNOG" id="COG0264">
    <property type="taxonomic scope" value="Bacteria"/>
</dbReference>
<dbReference type="HOGENOM" id="CLU_047155_0_0_11"/>
<dbReference type="InParanoid" id="A0LV53"/>
<dbReference type="OrthoDB" id="9808348at2"/>
<dbReference type="Proteomes" id="UP000008221">
    <property type="component" value="Chromosome"/>
</dbReference>
<dbReference type="GO" id="GO:0005737">
    <property type="term" value="C:cytoplasm"/>
    <property type="evidence" value="ECO:0007669"/>
    <property type="project" value="UniProtKB-SubCell"/>
</dbReference>
<dbReference type="GO" id="GO:0003746">
    <property type="term" value="F:translation elongation factor activity"/>
    <property type="evidence" value="ECO:0007669"/>
    <property type="project" value="UniProtKB-UniRule"/>
</dbReference>
<dbReference type="CDD" id="cd14275">
    <property type="entry name" value="UBA_EF-Ts"/>
    <property type="match status" value="1"/>
</dbReference>
<dbReference type="FunFam" id="1.10.286.20:FF:000001">
    <property type="entry name" value="Elongation factor Ts"/>
    <property type="match status" value="1"/>
</dbReference>
<dbReference type="FunFam" id="1.10.8.10:FF:000001">
    <property type="entry name" value="Elongation factor Ts"/>
    <property type="match status" value="1"/>
</dbReference>
<dbReference type="Gene3D" id="1.10.286.20">
    <property type="match status" value="1"/>
</dbReference>
<dbReference type="Gene3D" id="1.10.8.10">
    <property type="entry name" value="DNA helicase RuvA subunit, C-terminal domain"/>
    <property type="match status" value="1"/>
</dbReference>
<dbReference type="Gene3D" id="3.30.479.20">
    <property type="entry name" value="Elongation factor Ts, dimerisation domain"/>
    <property type="match status" value="2"/>
</dbReference>
<dbReference type="HAMAP" id="MF_00050">
    <property type="entry name" value="EF_Ts"/>
    <property type="match status" value="1"/>
</dbReference>
<dbReference type="InterPro" id="IPR036402">
    <property type="entry name" value="EF-Ts_dimer_sf"/>
</dbReference>
<dbReference type="InterPro" id="IPR001816">
    <property type="entry name" value="Transl_elong_EFTs/EF1B"/>
</dbReference>
<dbReference type="InterPro" id="IPR014039">
    <property type="entry name" value="Transl_elong_EFTs/EF1B_dimer"/>
</dbReference>
<dbReference type="InterPro" id="IPR018101">
    <property type="entry name" value="Transl_elong_Ts_CS"/>
</dbReference>
<dbReference type="InterPro" id="IPR009060">
    <property type="entry name" value="UBA-like_sf"/>
</dbReference>
<dbReference type="NCBIfam" id="TIGR00116">
    <property type="entry name" value="tsf"/>
    <property type="match status" value="1"/>
</dbReference>
<dbReference type="PANTHER" id="PTHR11741">
    <property type="entry name" value="ELONGATION FACTOR TS"/>
    <property type="match status" value="1"/>
</dbReference>
<dbReference type="PANTHER" id="PTHR11741:SF0">
    <property type="entry name" value="ELONGATION FACTOR TS, MITOCHONDRIAL"/>
    <property type="match status" value="1"/>
</dbReference>
<dbReference type="Pfam" id="PF00889">
    <property type="entry name" value="EF_TS"/>
    <property type="match status" value="1"/>
</dbReference>
<dbReference type="SUPFAM" id="SSF54713">
    <property type="entry name" value="Elongation factor Ts (EF-Ts), dimerisation domain"/>
    <property type="match status" value="1"/>
</dbReference>
<dbReference type="SUPFAM" id="SSF46934">
    <property type="entry name" value="UBA-like"/>
    <property type="match status" value="1"/>
</dbReference>
<dbReference type="PROSITE" id="PS01127">
    <property type="entry name" value="EF_TS_2"/>
    <property type="match status" value="1"/>
</dbReference>